<proteinExistence type="inferred from homology"/>
<dbReference type="EC" id="2.7.10.1"/>
<dbReference type="EMBL" id="DP000003">
    <property type="protein sequence ID" value="AAY88979.1"/>
    <property type="molecule type" value="Genomic_DNA"/>
</dbReference>
<dbReference type="SMR" id="Q00PJ8"/>
<dbReference type="GlyCosmos" id="Q00PJ8">
    <property type="glycosylation" value="11 sites, No reported glycans"/>
</dbReference>
<dbReference type="GO" id="GO:0005886">
    <property type="term" value="C:plasma membrane"/>
    <property type="evidence" value="ECO:0007669"/>
    <property type="project" value="TreeGrafter"/>
</dbReference>
<dbReference type="GO" id="GO:0002116">
    <property type="term" value="C:semaphorin receptor complex"/>
    <property type="evidence" value="ECO:0007669"/>
    <property type="project" value="TreeGrafter"/>
</dbReference>
<dbReference type="GO" id="GO:0005524">
    <property type="term" value="F:ATP binding"/>
    <property type="evidence" value="ECO:0007669"/>
    <property type="project" value="UniProtKB-KW"/>
</dbReference>
<dbReference type="GO" id="GO:0017154">
    <property type="term" value="F:semaphorin receptor activity"/>
    <property type="evidence" value="ECO:0007669"/>
    <property type="project" value="InterPro"/>
</dbReference>
<dbReference type="GO" id="GO:0004714">
    <property type="term" value="F:transmembrane receptor protein tyrosine kinase activity"/>
    <property type="evidence" value="ECO:0007669"/>
    <property type="project" value="UniProtKB-EC"/>
</dbReference>
<dbReference type="GO" id="GO:0007169">
    <property type="term" value="P:cell surface receptor protein tyrosine kinase signaling pathway"/>
    <property type="evidence" value="ECO:0007669"/>
    <property type="project" value="InterPro"/>
</dbReference>
<dbReference type="GO" id="GO:0050918">
    <property type="term" value="P:positive chemotaxis"/>
    <property type="evidence" value="ECO:0000250"/>
    <property type="project" value="UniProtKB"/>
</dbReference>
<dbReference type="GO" id="GO:2001028">
    <property type="term" value="P:positive regulation of endothelial cell chemotaxis"/>
    <property type="evidence" value="ECO:0000250"/>
    <property type="project" value="UniProtKB"/>
</dbReference>
<dbReference type="GO" id="GO:0071526">
    <property type="term" value="P:semaphorin-plexin signaling pathway"/>
    <property type="evidence" value="ECO:0000250"/>
    <property type="project" value="UniProtKB"/>
</dbReference>
<dbReference type="CDD" id="cd00603">
    <property type="entry name" value="IPT_PCSR"/>
    <property type="match status" value="1"/>
</dbReference>
<dbReference type="CDD" id="cd01180">
    <property type="entry name" value="IPT_plexin_repeat1"/>
    <property type="match status" value="1"/>
</dbReference>
<dbReference type="CDD" id="cd05058">
    <property type="entry name" value="PTKc_Met_Ron"/>
    <property type="match status" value="1"/>
</dbReference>
<dbReference type="FunFam" id="1.10.510.10:FF:000093">
    <property type="entry name" value="Hepatocyte growth factor receptor"/>
    <property type="match status" value="1"/>
</dbReference>
<dbReference type="FunFam" id="2.130.10.10:FF:000088">
    <property type="entry name" value="Hepatocyte growth factor receptor"/>
    <property type="match status" value="1"/>
</dbReference>
<dbReference type="FunFam" id="2.60.40.10:FF:000213">
    <property type="entry name" value="Hepatocyte growth factor receptor"/>
    <property type="match status" value="1"/>
</dbReference>
<dbReference type="FunFam" id="2.60.40.10:FF:000400">
    <property type="entry name" value="Hepatocyte growth factor receptor"/>
    <property type="match status" value="1"/>
</dbReference>
<dbReference type="FunFam" id="2.60.40.10:FF:002708">
    <property type="entry name" value="Hepatocyte growth factor receptor"/>
    <property type="match status" value="1"/>
</dbReference>
<dbReference type="FunFam" id="3.30.200.20:FF:000188">
    <property type="entry name" value="Hepatocyte growth factor receptor"/>
    <property type="match status" value="1"/>
</dbReference>
<dbReference type="FunFam" id="3.30.1680.10:FF:000006">
    <property type="entry name" value="Macrophage-stimulating 1 receptor b"/>
    <property type="match status" value="1"/>
</dbReference>
<dbReference type="Gene3D" id="2.60.40.10">
    <property type="entry name" value="Immunoglobulins"/>
    <property type="match status" value="2"/>
</dbReference>
<dbReference type="Gene3D" id="3.30.200.20">
    <property type="entry name" value="Phosphorylase Kinase, domain 1"/>
    <property type="match status" value="1"/>
</dbReference>
<dbReference type="Gene3D" id="1.10.510.10">
    <property type="entry name" value="Transferase(Phosphotransferase) domain 1"/>
    <property type="match status" value="1"/>
</dbReference>
<dbReference type="Gene3D" id="2.130.10.10">
    <property type="entry name" value="YVTN repeat-like/Quinoprotein amine dehydrogenase"/>
    <property type="match status" value="1"/>
</dbReference>
<dbReference type="InterPro" id="IPR013783">
    <property type="entry name" value="Ig-like_fold"/>
</dbReference>
<dbReference type="InterPro" id="IPR014756">
    <property type="entry name" value="Ig_E-set"/>
</dbReference>
<dbReference type="InterPro" id="IPR002909">
    <property type="entry name" value="IPT_dom"/>
</dbReference>
<dbReference type="InterPro" id="IPR011009">
    <property type="entry name" value="Kinase-like_dom_sf"/>
</dbReference>
<dbReference type="InterPro" id="IPR031148">
    <property type="entry name" value="Plexin"/>
</dbReference>
<dbReference type="InterPro" id="IPR002165">
    <property type="entry name" value="Plexin_repeat"/>
</dbReference>
<dbReference type="InterPro" id="IPR000719">
    <property type="entry name" value="Prot_kinase_dom"/>
</dbReference>
<dbReference type="InterPro" id="IPR017441">
    <property type="entry name" value="Protein_kinase_ATP_BS"/>
</dbReference>
<dbReference type="InterPro" id="IPR016201">
    <property type="entry name" value="PSI"/>
</dbReference>
<dbReference type="InterPro" id="IPR001627">
    <property type="entry name" value="Semap_dom"/>
</dbReference>
<dbReference type="InterPro" id="IPR036352">
    <property type="entry name" value="Semap_dom_sf"/>
</dbReference>
<dbReference type="InterPro" id="IPR001245">
    <property type="entry name" value="Ser-Thr/Tyr_kinase_cat_dom"/>
</dbReference>
<dbReference type="InterPro" id="IPR008266">
    <property type="entry name" value="Tyr_kinase_AS"/>
</dbReference>
<dbReference type="InterPro" id="IPR020635">
    <property type="entry name" value="Tyr_kinase_cat_dom"/>
</dbReference>
<dbReference type="InterPro" id="IPR016244">
    <property type="entry name" value="Tyr_kinase_HGF/MSP_rcpt"/>
</dbReference>
<dbReference type="InterPro" id="IPR015943">
    <property type="entry name" value="WD40/YVTN_repeat-like_dom_sf"/>
</dbReference>
<dbReference type="PANTHER" id="PTHR22625:SF61">
    <property type="entry name" value="HEPATOCYTE GROWTH FACTOR RECEPTOR"/>
    <property type="match status" value="1"/>
</dbReference>
<dbReference type="PANTHER" id="PTHR22625">
    <property type="entry name" value="PLEXIN"/>
    <property type="match status" value="1"/>
</dbReference>
<dbReference type="Pfam" id="PF07714">
    <property type="entry name" value="PK_Tyr_Ser-Thr"/>
    <property type="match status" value="1"/>
</dbReference>
<dbReference type="Pfam" id="PF01437">
    <property type="entry name" value="PSI"/>
    <property type="match status" value="1"/>
</dbReference>
<dbReference type="Pfam" id="PF01403">
    <property type="entry name" value="Sema"/>
    <property type="match status" value="1"/>
</dbReference>
<dbReference type="Pfam" id="PF01833">
    <property type="entry name" value="TIG"/>
    <property type="match status" value="3"/>
</dbReference>
<dbReference type="PIRSF" id="PIRSF000617">
    <property type="entry name" value="TyrPK_HGF-R"/>
    <property type="match status" value="1"/>
</dbReference>
<dbReference type="PRINTS" id="PR00109">
    <property type="entry name" value="TYRKINASE"/>
</dbReference>
<dbReference type="SMART" id="SM00429">
    <property type="entry name" value="IPT"/>
    <property type="match status" value="4"/>
</dbReference>
<dbReference type="SMART" id="SM00423">
    <property type="entry name" value="PSI"/>
    <property type="match status" value="1"/>
</dbReference>
<dbReference type="SMART" id="SM00630">
    <property type="entry name" value="Sema"/>
    <property type="match status" value="1"/>
</dbReference>
<dbReference type="SMART" id="SM00219">
    <property type="entry name" value="TyrKc"/>
    <property type="match status" value="1"/>
</dbReference>
<dbReference type="SUPFAM" id="SSF81296">
    <property type="entry name" value="E set domains"/>
    <property type="match status" value="3"/>
</dbReference>
<dbReference type="SUPFAM" id="SSF103575">
    <property type="entry name" value="Plexin repeat"/>
    <property type="match status" value="1"/>
</dbReference>
<dbReference type="SUPFAM" id="SSF56112">
    <property type="entry name" value="Protein kinase-like (PK-like)"/>
    <property type="match status" value="1"/>
</dbReference>
<dbReference type="SUPFAM" id="SSF101912">
    <property type="entry name" value="Sema domain"/>
    <property type="match status" value="1"/>
</dbReference>
<dbReference type="PROSITE" id="PS00107">
    <property type="entry name" value="PROTEIN_KINASE_ATP"/>
    <property type="match status" value="1"/>
</dbReference>
<dbReference type="PROSITE" id="PS50011">
    <property type="entry name" value="PROTEIN_KINASE_DOM"/>
    <property type="match status" value="1"/>
</dbReference>
<dbReference type="PROSITE" id="PS00109">
    <property type="entry name" value="PROTEIN_KINASE_TYR"/>
    <property type="match status" value="1"/>
</dbReference>
<dbReference type="PROSITE" id="PS51004">
    <property type="entry name" value="SEMA"/>
    <property type="match status" value="1"/>
</dbReference>
<name>MET_ATEAB</name>
<feature type="signal peptide" evidence="4">
    <location>
        <begin position="1"/>
        <end position="24"/>
    </location>
</feature>
<feature type="chain" id="PRO_0000274185" description="Hepatocyte growth factor receptor">
    <location>
        <begin position="25"/>
        <end position="1382"/>
    </location>
</feature>
<feature type="topological domain" description="Extracellular" evidence="4">
    <location>
        <begin position="25"/>
        <end position="933"/>
    </location>
</feature>
<feature type="transmembrane region" description="Helical" evidence="4">
    <location>
        <begin position="934"/>
        <end position="956"/>
    </location>
</feature>
<feature type="topological domain" description="Cytoplasmic" evidence="4">
    <location>
        <begin position="957"/>
        <end position="1382"/>
    </location>
</feature>
<feature type="domain" description="Sema" evidence="6">
    <location>
        <begin position="27"/>
        <end position="516"/>
    </location>
</feature>
<feature type="domain" description="IPT/TIG 1">
    <location>
        <begin position="564"/>
        <end position="656"/>
    </location>
</feature>
<feature type="domain" description="IPT/TIG 2">
    <location>
        <begin position="658"/>
        <end position="740"/>
    </location>
</feature>
<feature type="domain" description="IPT/TIG 3">
    <location>
        <begin position="743"/>
        <end position="837"/>
    </location>
</feature>
<feature type="domain" description="Protein kinase" evidence="5">
    <location>
        <begin position="1079"/>
        <end position="1346"/>
    </location>
</feature>
<feature type="region of interest" description="Interaction with RANBP9" evidence="1">
    <location>
        <begin position="1213"/>
        <end position="1382"/>
    </location>
</feature>
<feature type="region of interest" description="Interaction with MUC20" evidence="1">
    <location>
        <begin position="1321"/>
        <end position="1360"/>
    </location>
</feature>
<feature type="active site" description="Proton acceptor" evidence="5 7">
    <location>
        <position position="1205"/>
    </location>
</feature>
<feature type="binding site" evidence="5">
    <location>
        <begin position="1085"/>
        <end position="1093"/>
    </location>
    <ligand>
        <name>ATP</name>
        <dbReference type="ChEBI" id="CHEBI:30616"/>
    </ligand>
</feature>
<feature type="binding site" evidence="5">
    <location>
        <position position="1111"/>
    </location>
    <ligand>
        <name>ATP</name>
        <dbReference type="ChEBI" id="CHEBI:30616"/>
    </ligand>
</feature>
<feature type="site" description="Cleavage" evidence="4">
    <location>
        <begin position="308"/>
        <end position="309"/>
    </location>
</feature>
<feature type="modified residue" description="Phosphoserine" evidence="2">
    <location>
        <position position="967"/>
    </location>
</feature>
<feature type="modified residue" description="Phosphothreonine" evidence="2">
    <location>
        <position position="978"/>
    </location>
</feature>
<feature type="modified residue" description="Phosphoserine" evidence="2">
    <location>
        <position position="991"/>
    </location>
</feature>
<feature type="modified residue" description="Phosphoserine" evidence="2">
    <location>
        <position position="998"/>
    </location>
</feature>
<feature type="modified residue" description="Phosphoserine" evidence="2">
    <location>
        <position position="1001"/>
    </location>
</feature>
<feature type="modified residue" description="Phosphotyrosine" evidence="2">
    <location>
        <position position="1004"/>
    </location>
</feature>
<feature type="modified residue" description="Phosphotyrosine" evidence="2">
    <location>
        <position position="1231"/>
    </location>
</feature>
<feature type="modified residue" description="Phosphotyrosine; by autocatalysis" evidence="2">
    <location>
        <position position="1235"/>
    </location>
</feature>
<feature type="modified residue" description="Phosphotyrosine; by autocatalysis" evidence="2">
    <location>
        <position position="1236"/>
    </location>
</feature>
<feature type="modified residue" description="Phosphothreonine" evidence="2">
    <location>
        <position position="1290"/>
    </location>
</feature>
<feature type="modified residue" description="Phosphotyrosine; by autocatalysis" evidence="2">
    <location>
        <position position="1350"/>
    </location>
</feature>
<feature type="modified residue" description="Phosphotyrosine; by autocatalysis" evidence="2">
    <location>
        <position position="1357"/>
    </location>
</feature>
<feature type="modified residue" description="Phosphotyrosine" evidence="2">
    <location>
        <position position="1366"/>
    </location>
</feature>
<feature type="glycosylation site" description="N-linked (GlcNAc...) asparagine" evidence="4">
    <location>
        <position position="45"/>
    </location>
</feature>
<feature type="glycosylation site" description="N-linked (GlcNAc...) asparagine" evidence="4">
    <location>
        <position position="106"/>
    </location>
</feature>
<feature type="glycosylation site" description="N-linked (GlcNAc...) asparagine" evidence="4">
    <location>
        <position position="203"/>
    </location>
</feature>
<feature type="glycosylation site" description="N-linked (GlcNAc...) asparagine" evidence="4">
    <location>
        <position position="359"/>
    </location>
</feature>
<feature type="glycosylation site" description="N-linked (GlcNAc...) asparagine" evidence="4">
    <location>
        <position position="400"/>
    </location>
</feature>
<feature type="glycosylation site" description="N-linked (GlcNAc...) asparagine" evidence="4">
    <location>
        <position position="406"/>
    </location>
</feature>
<feature type="glycosylation site" description="O-linked (Man) threonine" evidence="2">
    <location>
        <position position="583"/>
    </location>
</feature>
<feature type="glycosylation site" description="N-linked (GlcNAc...) asparagine" evidence="4">
    <location>
        <position position="608"/>
    </location>
</feature>
<feature type="glycosylation site" description="N-linked (GlcNAc...) asparagine" evidence="4">
    <location>
        <position position="636"/>
    </location>
</feature>
<feature type="glycosylation site" description="O-linked (Man) threonine" evidence="2">
    <location>
        <position position="677"/>
    </location>
</feature>
<feature type="glycosylation site" description="O-linked (Man) threonine" evidence="2">
    <location>
        <position position="762"/>
    </location>
</feature>
<feature type="glycosylation site" description="N-linked (GlcNAc...) asparagine" evidence="4">
    <location>
        <position position="786"/>
    </location>
</feature>
<feature type="glycosylation site" description="N-linked (GlcNAc...) asparagine" evidence="4">
    <location>
        <position position="880"/>
    </location>
</feature>
<feature type="glycosylation site" description="N-linked (GlcNAc...) asparagine" evidence="4">
    <location>
        <position position="931"/>
    </location>
</feature>
<feature type="disulfide bond" evidence="6">
    <location>
        <begin position="95"/>
        <end position="101"/>
    </location>
</feature>
<feature type="disulfide bond" evidence="6">
    <location>
        <begin position="98"/>
        <end position="160"/>
    </location>
</feature>
<feature type="disulfide bond" evidence="6">
    <location>
        <begin position="133"/>
        <end position="141"/>
    </location>
</feature>
<feature type="disulfide bond" evidence="6">
    <location>
        <begin position="173"/>
        <end position="176"/>
    </location>
</feature>
<feature type="disulfide bond" evidence="6">
    <location>
        <begin position="299"/>
        <end position="364"/>
    </location>
</feature>
<feature type="disulfide bond" evidence="6">
    <location>
        <begin position="386"/>
        <end position="398"/>
    </location>
</feature>
<feature type="disulfide bond" evidence="6">
    <location>
        <begin position="521"/>
        <end position="539"/>
    </location>
</feature>
<feature type="disulfide bond" evidence="6">
    <location>
        <begin position="527"/>
        <end position="562"/>
    </location>
</feature>
<feature type="disulfide bond" evidence="6">
    <location>
        <begin position="530"/>
        <end position="546"/>
    </location>
</feature>
<feature type="disulfide bond" evidence="6">
    <location>
        <begin position="542"/>
        <end position="552"/>
    </location>
</feature>
<keyword id="KW-0067">ATP-binding</keyword>
<keyword id="KW-1015">Disulfide bond</keyword>
<keyword id="KW-0325">Glycoprotein</keyword>
<keyword id="KW-0418">Kinase</keyword>
<keyword id="KW-0472">Membrane</keyword>
<keyword id="KW-0547">Nucleotide-binding</keyword>
<keyword id="KW-0597">Phosphoprotein</keyword>
<keyword id="KW-0656">Proto-oncogene</keyword>
<keyword id="KW-0675">Receptor</keyword>
<keyword id="KW-0677">Repeat</keyword>
<keyword id="KW-0732">Signal</keyword>
<keyword id="KW-0808">Transferase</keyword>
<keyword id="KW-0812">Transmembrane</keyword>
<keyword id="KW-1133">Transmembrane helix</keyword>
<keyword id="KW-0829">Tyrosine-protein kinase</keyword>
<keyword id="KW-0832">Ubl conjugation</keyword>
<sequence length="1382" mass="155029">MKASAVLAPGILVILFTLVQKSNCECKEALVKSKMNVNMKYQLPNFTAETPIQNVVLHNHHIYLGAVNYIYVLSDKTLQKVAEYKTGPVLEHPDCLPCQDCRHKANLSNGIWKDNINMALLVDTYYDDQLISCGSVHRGTCQRHVLPPNNAADIQSEVHCMYTPQPEEEPSQCPDCVVSALGTKVLLSEKNRFINFFVGNTINSSYLPDHSLHSMSVRRLKETQDGFKFLTDQSYIDVLPEFRDSYPIKYIHAFKSNHFIYFLTVQRETLDAQTFHTRIIRFCSGDSGLHSYMEMPLECILTEKRRKRAAREEVFNILQAAYVSKPGAHLARQIGASLNDDILYGVFAQSKPDSAEPMNRSAVCAFPIKYVNEFFNKIVNKNNVRCLQHFYGPNHEHCFNRTLLRNSSSCDVRSDEYRTEFTTALQRVDLFMGQFNQVLLTSISTFIKGDLTIANLGTSEGRFMQVVVSRLGSSTPHVNFRLDSHPVSPEVIVEHPLNGNDYTLVVTGKKITKIPLNGLGCEHFQSCSQCLSAPAFVQCGWCHDKCVQLEECPSGTWTQETCLPTIYKVLPTSAPLEGGTTLTICGWDFGFRRNNKFDLKKTRVFLGNESCTVTLSESSTNMLKCTVGPALYEHFNMSIIISNSRGTVQYSTFSYVDPIITSISPTYGPKTGGTLLTLTGKYLDSGNSRHISIGGKTCTLKSVSNSILECYTPPQTTSTEFPVKLKIDLANRNTYSFSYQEDPIIYKIHPIKSFISGGSTITGVGKNLNSVSVLRMVINVHEAGRNFTVACQHRSNSEIICCTTPSLQQLDLQLPLTTRAFFMLDGIHSRYFDLIYVHNPMFKVFEKPVKISIGIENILEIKGNDIDPEAVKGEVLKVGNKSCENIHSYSETVLCTVPNDLLKLNSELNIEWKQAVTSTVLGKVIVQPDQNITEFIVGILSISGILLTLLGLLLWWKKKKQIKDLGSELVRYDARVHTPHLDRLVSARSVSPTTEMVSNESVDYRATFPEDQFPNSSQNGSCRQVQYPLTDLSPILTSGDSDISSPLLQNTVHIDLSALNPELVQAVQHVVIGPSSLIVHFNEVIGRGHFGCVYHGTLLDNDDKKIHCAVKSLNRITDIGEVSQFLTEGIIMKDFSHPNVLSLLGICLRSEGSPLVVLPYMKHGDLRNFIRNETHNPTVKDLIGFGLQVAKGMKYLASKKFVHRDLAARNCMLDENFTVKVADFGLARDMYDKEYYSVHNKTGAKLPVKWMALESLQTQKFTTKSDVWSFGVLLWELMTRGAPPYPDVNTFDITVYLLQGRRLLQPEYCPDPLYEVMLKCWHPKAELRPSFSELVSRISAIFSTFIGEHYVHVNATYVNIKCVAPYPSLLSSQDNFDSEGNT</sequence>
<reference key="1">
    <citation type="submission" date="2006-10" db="EMBL/GenBank/DDBJ databases">
        <title>NISC comparative sequencing initiative.</title>
        <authorList>
            <person name="Antonellis A."/>
            <person name="Ayele K."/>
            <person name="Benjamin B."/>
            <person name="Blakesley R.W."/>
            <person name="Boakye A."/>
            <person name="Bouffard G.G."/>
            <person name="Brinkley C."/>
            <person name="Brooks S."/>
            <person name="Chu G."/>
            <person name="Coleman H."/>
            <person name="Engle J."/>
            <person name="Gestole M."/>
            <person name="Greene A."/>
            <person name="Guan X."/>
            <person name="Gupta J."/>
            <person name="Haghighi P."/>
            <person name="Han J."/>
            <person name="Hansen N."/>
            <person name="Ho S.-L."/>
            <person name="Hu P."/>
            <person name="Hunter G."/>
            <person name="Hurle B."/>
            <person name="Idol J.R."/>
            <person name="Kwong P."/>
            <person name="Laric P."/>
            <person name="Larson S."/>
            <person name="Lee-Lin S.-Q."/>
            <person name="Legaspi R."/>
            <person name="Madden M."/>
            <person name="Maduro Q.L."/>
            <person name="Maduro V.B."/>
            <person name="Margulies E.H."/>
            <person name="Masiello C."/>
            <person name="Maskeri B."/>
            <person name="McDowell J."/>
            <person name="Mojidi H.A."/>
            <person name="Mullikin J.C."/>
            <person name="Oestreicher J.S."/>
            <person name="Park M."/>
            <person name="Portnoy M.E."/>
            <person name="Prasad A."/>
            <person name="Puri O."/>
            <person name="Reddix-Dugue N."/>
            <person name="Schandler K."/>
            <person name="Schueler M.G."/>
            <person name="Sison C."/>
            <person name="Stantripop S."/>
            <person name="Stephen E."/>
            <person name="Taye A."/>
            <person name="Thomas J.W."/>
            <person name="Thomas P.J."/>
            <person name="Tsipouri V."/>
            <person name="Ung L."/>
            <person name="Vogt J.L."/>
            <person name="Wetherby K.D."/>
            <person name="Young A."/>
            <person name="Green E.D."/>
        </authorList>
    </citation>
    <scope>NUCLEOTIDE SEQUENCE [LARGE SCALE GENOMIC DNA]</scope>
</reference>
<evidence type="ECO:0000250" key="1"/>
<evidence type="ECO:0000250" key="2">
    <source>
        <dbReference type="UniProtKB" id="P08581"/>
    </source>
</evidence>
<evidence type="ECO:0000250" key="3">
    <source>
        <dbReference type="UniProtKB" id="P16056"/>
    </source>
</evidence>
<evidence type="ECO:0000255" key="4"/>
<evidence type="ECO:0000255" key="5">
    <source>
        <dbReference type="PROSITE-ProRule" id="PRU00159"/>
    </source>
</evidence>
<evidence type="ECO:0000255" key="6">
    <source>
        <dbReference type="PROSITE-ProRule" id="PRU00352"/>
    </source>
</evidence>
<evidence type="ECO:0000255" key="7">
    <source>
        <dbReference type="PROSITE-ProRule" id="PRU10028"/>
    </source>
</evidence>
<organism>
    <name type="scientific">Atelerix albiventris</name>
    <name type="common">Middle-African hedgehog</name>
    <name type="synonym">Four-toed hedgehog</name>
    <dbReference type="NCBI Taxonomy" id="9368"/>
    <lineage>
        <taxon>Eukaryota</taxon>
        <taxon>Metazoa</taxon>
        <taxon>Chordata</taxon>
        <taxon>Craniata</taxon>
        <taxon>Vertebrata</taxon>
        <taxon>Euteleostomi</taxon>
        <taxon>Mammalia</taxon>
        <taxon>Eutheria</taxon>
        <taxon>Laurasiatheria</taxon>
        <taxon>Eulipotyphla</taxon>
        <taxon>Erinaceidae</taxon>
        <taxon>Erinaceinae</taxon>
        <taxon>Atelerix</taxon>
    </lineage>
</organism>
<accession>Q00PJ8</accession>
<comment type="function">
    <text evidence="1">Receptor tyrosine kinase that transduces signals from the extracellular matrix into the cytoplasm by binding to hepatocyte growth factor/HGF ligand. Regulates many physiological processes including proliferation, scattering, morphogenesis and survival. Ligand binding at the cell surface induces autophosphorylation of MET on its intracellular domain that provides docking sites for downstream signaling molecules. Following activation by ligand, interacts with the PI3-kinase subunit PIK3R1, PLCG1, SRC, GRB2, STAT3 or the adapter GAB1. Recruitment of these downstream effectors by MET leads to the activation of several signaling cascades including the RAS-ERK, PI3 kinase-AKT, or PLCgamma-PKC. The RAS-ERK activation is associated with the morphogenetic effects while PI3K/AKT coordinates prosurvival effects. During embryonic development, MET signaling plays a role in gastrulation, development and migration of muscles and neuronal precursors, angiogenesis and kidney formation. In adults, participates in wound healing as well as organ regeneration and tissue remodeling. Also promotes differentiation and proliferation of hematopoietic cells (By similarity).</text>
</comment>
<comment type="catalytic activity">
    <reaction evidence="7">
        <text>L-tyrosyl-[protein] + ATP = O-phospho-L-tyrosyl-[protein] + ADP + H(+)</text>
        <dbReference type="Rhea" id="RHEA:10596"/>
        <dbReference type="Rhea" id="RHEA-COMP:10136"/>
        <dbReference type="Rhea" id="RHEA-COMP:20101"/>
        <dbReference type="ChEBI" id="CHEBI:15378"/>
        <dbReference type="ChEBI" id="CHEBI:30616"/>
        <dbReference type="ChEBI" id="CHEBI:46858"/>
        <dbReference type="ChEBI" id="CHEBI:61978"/>
        <dbReference type="ChEBI" id="CHEBI:456216"/>
        <dbReference type="EC" id="2.7.10.1"/>
    </reaction>
</comment>
<comment type="activity regulation">
    <text evidence="1">In its inactive state, the C-terminal tail interacts with the catalytic domain and inhibits the kinase activity. Upon ligand binding, the C-terminal tail is displaced and becomes phosphorylated, thus increasing the kinase activity (By similarity).</text>
</comment>
<comment type="subunit">
    <text evidence="2 3">Heterodimer made of an alpha chain (50 kDa) and a beta chain (145 kDa) which are disulfide linked. Binds PLXNB1. Interacts when phosphorylated with downstream effectors including STAT3, PIK3R1, SRC, PCLG1, GRB2 and GAB1. Interacts with SPSB1, SPSB2 and SPSB4. Interacts with INPP5D/SHIP1. When phosphorylated at Tyr-1357, interacts with INPPL1/SHIP2. Interacts with RANBP9 and RANBP10, as well as SPSB1, SPSB2, SPSB3 and SPSB4. SPSB1 binding occurs in the presence and in the absence of HGF, however HGF treatment has a positive effect on this interaction. Interacts with MUC20; prevents interaction with GRB2 and suppresses hepatocyte growth factor-induced cell proliferation. Interacts with GRB10 (By similarity). Interacts with PTPN1 and PTPN2 (By similarity). Interacts with tensin TNS3 (By similarity). Interacts (when phosphorylated) with tensin TNS4 (via SH2 domain); the interaction increases MET protein stability by inhibiting MET endocytosis and subsequent lysosomal degradation (By similarity).</text>
</comment>
<comment type="subcellular location">
    <subcellularLocation>
        <location evidence="1">Membrane</location>
        <topology evidence="1">Single-pass type I membrane protein</topology>
    </subcellularLocation>
</comment>
<comment type="domain">
    <text evidence="1">The kinase domain is involved in SPSB1 binding.</text>
</comment>
<comment type="domain">
    <text evidence="1">The beta-propeller Sema domain mediates binding to HGF.</text>
</comment>
<comment type="PTM">
    <text evidence="2">Autophosphorylated in response to ligand binding on Tyr-1235 and Tyr-1236 in the kinase domain leading to further phosphorylation of Tyr-1350 and Tyr-1357 in the C-terminal multifunctional docking site. Dephosphorylated by PTPRJ at Tyr-1350 and Tyr-1366. Dephosphorylated by PTPN1 and PTPN2 (By similarity).</text>
</comment>
<comment type="PTM">
    <text evidence="2">Ubiquitinated. Ubiquitination by CBL regulates the receptor stability and activity through proteasomal degradation (By similarity).</text>
</comment>
<comment type="PTM">
    <text evidence="2">O-mannosylation of IPT/TIG domains by TMEM260 is required for protein maturation. O-mannosylated residues are composed of single mannose glycans that are not elongated or modified.</text>
</comment>
<comment type="similarity">
    <text evidence="5">Belongs to the protein kinase superfamily. Tyr protein kinase family.</text>
</comment>
<gene>
    <name type="primary">MET</name>
</gene>
<protein>
    <recommendedName>
        <fullName>Hepatocyte growth factor receptor</fullName>
        <shortName>HGF receptor</shortName>
        <ecNumber>2.7.10.1</ecNumber>
    </recommendedName>
    <alternativeName>
        <fullName>HGF/SF receptor</fullName>
    </alternativeName>
    <alternativeName>
        <fullName>Proto-oncogene c-Met</fullName>
    </alternativeName>
    <alternativeName>
        <fullName>Scatter factor receptor</fullName>
        <shortName>SF receptor</shortName>
    </alternativeName>
    <alternativeName>
        <fullName>Tyrosine-protein kinase Met</fullName>
    </alternativeName>
</protein>